<accession>C0HL14</accession>
<protein>
    <recommendedName>
        <fullName evidence="3">Cyclotide vodo I1</fullName>
    </recommendedName>
</protein>
<keyword id="KW-0903">Direct protein sequencing</keyword>
<keyword id="KW-1015">Disulfide bond</keyword>
<keyword id="KW-0960">Knottin</keyword>
<keyword id="KW-0611">Plant defense</keyword>
<proteinExistence type="evidence at protein level"/>
<evidence type="ECO:0000255" key="1">
    <source>
        <dbReference type="PROSITE-ProRule" id="PRU00395"/>
    </source>
</evidence>
<evidence type="ECO:0000269" key="2">
    <source>
    </source>
</evidence>
<evidence type="ECO:0000303" key="3">
    <source>
    </source>
</evidence>
<evidence type="ECO:0000305" key="4"/>
<evidence type="ECO:0000305" key="5">
    <source>
    </source>
</evidence>
<comment type="function">
    <text evidence="1">Probably participates in a plant defense mechanism.</text>
</comment>
<comment type="domain">
    <text evidence="4">The presence of a 'disulfide through disulfide knot' structurally defines this protein as a knottin.</text>
</comment>
<comment type="PTM">
    <text evidence="1 2">This is a cyclic peptide.</text>
</comment>
<comment type="PTM">
    <text evidence="2">Contains 3 disulfide bonds.</text>
</comment>
<comment type="mass spectrometry" mass="2746.8" method="Electrospray" evidence="2"/>
<comment type="similarity">
    <text evidence="5">Belongs to the cyclotide family. Bracelet subfamily.</text>
</comment>
<comment type="caution">
    <text evidence="1">This peptide is cyclic. The start position was chosen by similarity to Oak1 (kalata B1) for which the DNA sequence is known.</text>
</comment>
<name>CYV1_VIOOD</name>
<dbReference type="SMR" id="C0HL14"/>
<dbReference type="GO" id="GO:0006952">
    <property type="term" value="P:defense response"/>
    <property type="evidence" value="ECO:0007669"/>
    <property type="project" value="UniProtKB-KW"/>
</dbReference>
<dbReference type="InterPro" id="IPR005535">
    <property type="entry name" value="Cyclotide"/>
</dbReference>
<dbReference type="InterPro" id="IPR036146">
    <property type="entry name" value="Cyclotide_sf"/>
</dbReference>
<dbReference type="Pfam" id="PF03784">
    <property type="entry name" value="Cyclotide"/>
    <property type="match status" value="1"/>
</dbReference>
<dbReference type="SUPFAM" id="SSF57038">
    <property type="entry name" value="Cyclotides"/>
    <property type="match status" value="1"/>
</dbReference>
<organism evidence="3">
    <name type="scientific">Viola odorata</name>
    <name type="common">Sweet violet</name>
    <dbReference type="NCBI Taxonomy" id="97441"/>
    <lineage>
        <taxon>Eukaryota</taxon>
        <taxon>Viridiplantae</taxon>
        <taxon>Streptophyta</taxon>
        <taxon>Embryophyta</taxon>
        <taxon>Tracheophyta</taxon>
        <taxon>Spermatophyta</taxon>
        <taxon>Magnoliopsida</taxon>
        <taxon>eudicotyledons</taxon>
        <taxon>Gunneridae</taxon>
        <taxon>Pentapetalae</taxon>
        <taxon>rosids</taxon>
        <taxon>fabids</taxon>
        <taxon>Malpighiales</taxon>
        <taxon>Violaceae</taxon>
        <taxon>Viola</taxon>
        <taxon>Viola subgen. Viola</taxon>
        <taxon>Viola sect. Viola</taxon>
        <taxon>Viola subsect. Viola</taxon>
    </lineage>
</organism>
<reference evidence="4" key="1">
    <citation type="journal article" date="2017" name="J. Nat. Prod.">
        <title>Cyclotides from the Indian Medicinal Plant Viola odorata (Banafsha): Identification and Characterization.</title>
        <authorList>
            <person name="Narayani M."/>
            <person name="Chadha A."/>
            <person name="Srivastava S."/>
        </authorList>
    </citation>
    <scope>PROTEIN SEQUENCE</scope>
    <scope>MASS SPECTROMETRY</scope>
    <scope>IDENTIFICATION BY MASS SPECTROMETRY</scope>
    <scope>PRESENCE OF DISULFIDE BONDS</scope>
    <scope>CYCLIZATION</scope>
</reference>
<feature type="peptide" id="PRO_0000441789" description="Cyclotide vodo I1" evidence="2">
    <location>
        <begin position="1"/>
        <end position="28"/>
    </location>
</feature>
<feature type="disulfide bond" evidence="1">
    <location>
        <begin position="4"/>
        <end position="18"/>
    </location>
</feature>
<feature type="disulfide bond" evidence="1">
    <location>
        <begin position="8"/>
        <end position="20"/>
    </location>
</feature>
<feature type="disulfide bond" evidence="1">
    <location>
        <begin position="13"/>
        <end position="25"/>
    </location>
</feature>
<sequence length="28" mass="2772">GVFCGEACAQASCSIAGCECIAGLCYKN</sequence>